<name>METXA_LEPBJ</name>
<reference key="1">
    <citation type="journal article" date="2006" name="Proc. Natl. Acad. Sci. U.S.A.">
        <title>Genome reduction in Leptospira borgpetersenii reflects limited transmission potential.</title>
        <authorList>
            <person name="Bulach D.M."/>
            <person name="Zuerner R.L."/>
            <person name="Wilson P."/>
            <person name="Seemann T."/>
            <person name="McGrath A."/>
            <person name="Cullen P.A."/>
            <person name="Davis J."/>
            <person name="Johnson M."/>
            <person name="Kuczek E."/>
            <person name="Alt D.P."/>
            <person name="Peterson-Burch B."/>
            <person name="Coppel R.L."/>
            <person name="Rood J.I."/>
            <person name="Davies J.K."/>
            <person name="Adler B."/>
        </authorList>
    </citation>
    <scope>NUCLEOTIDE SEQUENCE [LARGE SCALE GENOMIC DNA]</scope>
    <source>
        <strain>JB197</strain>
    </source>
</reference>
<accession>Q04RK8</accession>
<comment type="function">
    <text evidence="1">Transfers an acetyl group from acetyl-CoA to L-homoserine, forming acetyl-L-homoserine.</text>
</comment>
<comment type="catalytic activity">
    <reaction evidence="1">
        <text>L-homoserine + acetyl-CoA = O-acetyl-L-homoserine + CoA</text>
        <dbReference type="Rhea" id="RHEA:13701"/>
        <dbReference type="ChEBI" id="CHEBI:57287"/>
        <dbReference type="ChEBI" id="CHEBI:57288"/>
        <dbReference type="ChEBI" id="CHEBI:57476"/>
        <dbReference type="ChEBI" id="CHEBI:57716"/>
        <dbReference type="EC" id="2.3.1.31"/>
    </reaction>
</comment>
<comment type="pathway">
    <text evidence="1">Amino-acid biosynthesis; L-methionine biosynthesis via de novo pathway; O-acetyl-L-homoserine from L-homoserine: step 1/1.</text>
</comment>
<comment type="subunit">
    <text evidence="1">Homodimer.</text>
</comment>
<comment type="subcellular location">
    <subcellularLocation>
        <location evidence="1">Cytoplasm</location>
    </subcellularLocation>
</comment>
<comment type="similarity">
    <text evidence="1">Belongs to the AB hydrolase superfamily. MetX family.</text>
</comment>
<gene>
    <name evidence="1" type="primary">metXA</name>
    <name type="ordered locus">LBJ_1944</name>
</gene>
<organism>
    <name type="scientific">Leptospira borgpetersenii serovar Hardjo-bovis (strain JB197)</name>
    <dbReference type="NCBI Taxonomy" id="355277"/>
    <lineage>
        <taxon>Bacteria</taxon>
        <taxon>Pseudomonadati</taxon>
        <taxon>Spirochaetota</taxon>
        <taxon>Spirochaetia</taxon>
        <taxon>Leptospirales</taxon>
        <taxon>Leptospiraceae</taxon>
        <taxon>Leptospira</taxon>
    </lineage>
</organism>
<evidence type="ECO:0000255" key="1">
    <source>
        <dbReference type="HAMAP-Rule" id="MF_00296"/>
    </source>
</evidence>
<protein>
    <recommendedName>
        <fullName evidence="1">Homoserine O-acetyltransferase</fullName>
        <shortName evidence="1">HAT</shortName>
        <ecNumber evidence="1">2.3.1.31</ecNumber>
    </recommendedName>
    <alternativeName>
        <fullName evidence="1">Homoserine transacetylase</fullName>
        <shortName evidence="1">HTA</shortName>
    </alternativeName>
</protein>
<sequence length="368" mass="40427">MNESGSIGIIETKYAEFKELPLKNGSVLSPVVIAYETYGTLSPSKNNAILICHALSGDAHAAGYHSESDKKPGWWDDYIGPGKSFDTNQYFIICSNVIGGCKGSSGPLSIHPKTGTPYGSRFPFVSIQDMVKAQKLLVEFLGIDKLFCVAGGSMGGMQALEWSIAYPDSLLNCIVMASTAEHSAMQIAFNEVGRQAILSDPNWNNGLYDENSPRKGLALARMVGHITYLSDDKMREKFGRNPPRGNILTTDFAVGSYLIYQGESFVDRFDANSYIYVTKALDHYSLGKGKELTAALSTATCRFLIVSYSSDWLYPPAQSREIVKSLEAADKRVFYLELQSGEGHDSFLLKNPKQIEILKGFLENQSSP</sequence>
<feature type="chain" id="PRO_1000021880" description="Homoserine O-acetyltransferase">
    <location>
        <begin position="1"/>
        <end position="368"/>
    </location>
</feature>
<feature type="domain" description="AB hydrolase-1" evidence="1">
    <location>
        <begin position="47"/>
        <end position="349"/>
    </location>
</feature>
<feature type="active site" description="Nucleophile" evidence="1">
    <location>
        <position position="153"/>
    </location>
</feature>
<feature type="active site" evidence="1">
    <location>
        <position position="311"/>
    </location>
</feature>
<feature type="active site" evidence="1">
    <location>
        <position position="344"/>
    </location>
</feature>
<feature type="binding site" evidence="1">
    <location>
        <position position="221"/>
    </location>
    <ligand>
        <name>substrate</name>
    </ligand>
</feature>
<feature type="binding site" evidence="1">
    <location>
        <position position="345"/>
    </location>
    <ligand>
        <name>substrate</name>
    </ligand>
</feature>
<keyword id="KW-0012">Acyltransferase</keyword>
<keyword id="KW-0028">Amino-acid biosynthesis</keyword>
<keyword id="KW-0963">Cytoplasm</keyword>
<keyword id="KW-0486">Methionine biosynthesis</keyword>
<keyword id="KW-0808">Transferase</keyword>
<dbReference type="EC" id="2.3.1.31" evidence="1"/>
<dbReference type="EMBL" id="CP000350">
    <property type="protein sequence ID" value="ABJ76462.1"/>
    <property type="molecule type" value="Genomic_DNA"/>
</dbReference>
<dbReference type="SMR" id="Q04RK8"/>
<dbReference type="ESTHER" id="lepin-METX">
    <property type="family name" value="Homoserine_transacetylase"/>
</dbReference>
<dbReference type="KEGG" id="lbj:LBJ_1944"/>
<dbReference type="HOGENOM" id="CLU_028760_1_2_12"/>
<dbReference type="UniPathway" id="UPA00051">
    <property type="reaction ID" value="UER00074"/>
</dbReference>
<dbReference type="Proteomes" id="UP000000656">
    <property type="component" value="Chromosome 1"/>
</dbReference>
<dbReference type="GO" id="GO:0005737">
    <property type="term" value="C:cytoplasm"/>
    <property type="evidence" value="ECO:0007669"/>
    <property type="project" value="UniProtKB-SubCell"/>
</dbReference>
<dbReference type="GO" id="GO:0004414">
    <property type="term" value="F:homoserine O-acetyltransferase activity"/>
    <property type="evidence" value="ECO:0007669"/>
    <property type="project" value="UniProtKB-UniRule"/>
</dbReference>
<dbReference type="GO" id="GO:0009092">
    <property type="term" value="P:homoserine metabolic process"/>
    <property type="evidence" value="ECO:0007669"/>
    <property type="project" value="TreeGrafter"/>
</dbReference>
<dbReference type="GO" id="GO:0009086">
    <property type="term" value="P:methionine biosynthetic process"/>
    <property type="evidence" value="ECO:0007669"/>
    <property type="project" value="UniProtKB-UniRule"/>
</dbReference>
<dbReference type="FunFam" id="1.10.1740.110:FF:000001">
    <property type="entry name" value="Homoserine O-acetyltransferase"/>
    <property type="match status" value="1"/>
</dbReference>
<dbReference type="Gene3D" id="1.10.1740.110">
    <property type="match status" value="1"/>
</dbReference>
<dbReference type="Gene3D" id="3.40.50.1820">
    <property type="entry name" value="alpha/beta hydrolase"/>
    <property type="match status" value="1"/>
</dbReference>
<dbReference type="HAMAP" id="MF_00296">
    <property type="entry name" value="MetX_acyltransf"/>
    <property type="match status" value="1"/>
</dbReference>
<dbReference type="InterPro" id="IPR000073">
    <property type="entry name" value="AB_hydrolase_1"/>
</dbReference>
<dbReference type="InterPro" id="IPR029058">
    <property type="entry name" value="AB_hydrolase_fold"/>
</dbReference>
<dbReference type="InterPro" id="IPR008220">
    <property type="entry name" value="HAT_MetX-like"/>
</dbReference>
<dbReference type="NCBIfam" id="TIGR01392">
    <property type="entry name" value="homoserO_Ac_trn"/>
    <property type="match status" value="1"/>
</dbReference>
<dbReference type="NCBIfam" id="NF001209">
    <property type="entry name" value="PRK00175.1"/>
    <property type="match status" value="1"/>
</dbReference>
<dbReference type="PANTHER" id="PTHR32268">
    <property type="entry name" value="HOMOSERINE O-ACETYLTRANSFERASE"/>
    <property type="match status" value="1"/>
</dbReference>
<dbReference type="PANTHER" id="PTHR32268:SF11">
    <property type="entry name" value="HOMOSERINE O-ACETYLTRANSFERASE"/>
    <property type="match status" value="1"/>
</dbReference>
<dbReference type="Pfam" id="PF00561">
    <property type="entry name" value="Abhydrolase_1"/>
    <property type="match status" value="1"/>
</dbReference>
<dbReference type="PIRSF" id="PIRSF000443">
    <property type="entry name" value="Homoser_Ac_trans"/>
    <property type="match status" value="1"/>
</dbReference>
<dbReference type="SUPFAM" id="SSF53474">
    <property type="entry name" value="alpha/beta-Hydrolases"/>
    <property type="match status" value="1"/>
</dbReference>
<proteinExistence type="inferred from homology"/>